<keyword id="KW-0046">Antibiotic resistance</keyword>
<keyword id="KW-0050">Antiport</keyword>
<keyword id="KW-0997">Cell inner membrane</keyword>
<keyword id="KW-1003">Cell membrane</keyword>
<keyword id="KW-0472">Membrane</keyword>
<keyword id="KW-1185">Reference proteome</keyword>
<keyword id="KW-0812">Transmembrane</keyword>
<keyword id="KW-1133">Transmembrane helix</keyword>
<keyword id="KW-0813">Transport</keyword>
<organism>
    <name type="scientific">Escherichia coli O157:H7</name>
    <dbReference type="NCBI Taxonomy" id="83334"/>
    <lineage>
        <taxon>Bacteria</taxon>
        <taxon>Pseudomonadati</taxon>
        <taxon>Pseudomonadota</taxon>
        <taxon>Gammaproteobacteria</taxon>
        <taxon>Enterobacterales</taxon>
        <taxon>Enterobacteriaceae</taxon>
        <taxon>Escherichia</taxon>
    </lineage>
</organism>
<gene>
    <name type="primary">mdtM</name>
    <name type="ordered locus">Z5939</name>
    <name type="ordered locus">ECs5300</name>
</gene>
<feature type="chain" id="PRO_0000084840" description="Multidrug resistance protein MdtM">
    <location>
        <begin position="1"/>
        <end position="410"/>
    </location>
</feature>
<feature type="topological domain" description="Cytoplasmic" evidence="3">
    <location>
        <begin position="1"/>
        <end position="11"/>
    </location>
</feature>
<feature type="transmembrane region" description="Helical" evidence="2">
    <location>
        <begin position="12"/>
        <end position="32"/>
    </location>
</feature>
<feature type="topological domain" description="Periplasmic" evidence="3">
    <location>
        <begin position="33"/>
        <end position="48"/>
    </location>
</feature>
<feature type="transmembrane region" description="Helical" evidence="2">
    <location>
        <begin position="49"/>
        <end position="69"/>
    </location>
</feature>
<feature type="topological domain" description="Cytoplasmic" evidence="3">
    <location>
        <begin position="70"/>
        <end position="78"/>
    </location>
</feature>
<feature type="transmembrane region" description="Helical" evidence="2">
    <location>
        <begin position="79"/>
        <end position="99"/>
    </location>
</feature>
<feature type="topological domain" description="Periplasmic" evidence="3">
    <location>
        <begin position="100"/>
        <end position="103"/>
    </location>
</feature>
<feature type="transmembrane region" description="Helical" evidence="2">
    <location>
        <begin position="104"/>
        <end position="124"/>
    </location>
</feature>
<feature type="topological domain" description="Cytoplasmic" evidence="3">
    <location>
        <begin position="125"/>
        <end position="140"/>
    </location>
</feature>
<feature type="transmembrane region" description="Helical" evidence="2">
    <location>
        <begin position="141"/>
        <end position="161"/>
    </location>
</feature>
<feature type="topological domain" description="Periplasmic" evidence="3">
    <location>
        <begin position="162"/>
        <end position="167"/>
    </location>
</feature>
<feature type="transmembrane region" description="Helical" evidence="2">
    <location>
        <begin position="168"/>
        <end position="188"/>
    </location>
</feature>
<feature type="topological domain" description="Cytoplasmic" evidence="3">
    <location>
        <begin position="189"/>
        <end position="216"/>
    </location>
</feature>
<feature type="transmembrane region" description="Helical" evidence="2">
    <location>
        <begin position="217"/>
        <end position="237"/>
    </location>
</feature>
<feature type="topological domain" description="Periplasmic" evidence="3">
    <location>
        <begin position="238"/>
        <end position="251"/>
    </location>
</feature>
<feature type="transmembrane region" description="Helical" evidence="2">
    <location>
        <begin position="252"/>
        <end position="272"/>
    </location>
</feature>
<feature type="topological domain" description="Cytoplasmic" evidence="3">
    <location>
        <begin position="273"/>
        <end position="282"/>
    </location>
</feature>
<feature type="transmembrane region" description="Helical" evidence="2">
    <location>
        <begin position="283"/>
        <end position="303"/>
    </location>
</feature>
<feature type="topological domain" description="Periplasmic" evidence="3">
    <location>
        <begin position="304"/>
        <end position="307"/>
    </location>
</feature>
<feature type="transmembrane region" description="Helical" evidence="2">
    <location>
        <begin position="308"/>
        <end position="328"/>
    </location>
</feature>
<feature type="topological domain" description="Cytoplasmic" evidence="3">
    <location>
        <begin position="329"/>
        <end position="348"/>
    </location>
</feature>
<feature type="transmembrane region" description="Helical" evidence="2">
    <location>
        <begin position="349"/>
        <end position="369"/>
    </location>
</feature>
<feature type="topological domain" description="Periplasmic" evidence="3">
    <location>
        <begin position="370"/>
        <end position="373"/>
    </location>
</feature>
<feature type="transmembrane region" description="Helical" evidence="2">
    <location>
        <begin position="374"/>
        <end position="394"/>
    </location>
</feature>
<feature type="topological domain" description="Cytoplasmic" evidence="1">
    <location>
        <begin position="395"/>
        <end position="410"/>
    </location>
</feature>
<proteinExistence type="inferred from homology"/>
<reference key="1">
    <citation type="journal article" date="2001" name="Nature">
        <title>Genome sequence of enterohaemorrhagic Escherichia coli O157:H7.</title>
        <authorList>
            <person name="Perna N.T."/>
            <person name="Plunkett G. III"/>
            <person name="Burland V."/>
            <person name="Mau B."/>
            <person name="Glasner J.D."/>
            <person name="Rose D.J."/>
            <person name="Mayhew G.F."/>
            <person name="Evans P.S."/>
            <person name="Gregor J."/>
            <person name="Kirkpatrick H.A."/>
            <person name="Posfai G."/>
            <person name="Hackett J."/>
            <person name="Klink S."/>
            <person name="Boutin A."/>
            <person name="Shao Y."/>
            <person name="Miller L."/>
            <person name="Grotbeck E.J."/>
            <person name="Davis N.W."/>
            <person name="Lim A."/>
            <person name="Dimalanta E.T."/>
            <person name="Potamousis K."/>
            <person name="Apodaca J."/>
            <person name="Anantharaman T.S."/>
            <person name="Lin J."/>
            <person name="Yen G."/>
            <person name="Schwartz D.C."/>
            <person name="Welch R.A."/>
            <person name="Blattner F.R."/>
        </authorList>
    </citation>
    <scope>NUCLEOTIDE SEQUENCE [LARGE SCALE GENOMIC DNA]</scope>
    <source>
        <strain>O157:H7 / EDL933 / ATCC 700927 / EHEC</strain>
    </source>
</reference>
<reference key="2">
    <citation type="journal article" date="2001" name="DNA Res.">
        <title>Complete genome sequence of enterohemorrhagic Escherichia coli O157:H7 and genomic comparison with a laboratory strain K-12.</title>
        <authorList>
            <person name="Hayashi T."/>
            <person name="Makino K."/>
            <person name="Ohnishi M."/>
            <person name="Kurokawa K."/>
            <person name="Ishii K."/>
            <person name="Yokoyama K."/>
            <person name="Han C.-G."/>
            <person name="Ohtsubo E."/>
            <person name="Nakayama K."/>
            <person name="Murata T."/>
            <person name="Tanaka M."/>
            <person name="Tobe T."/>
            <person name="Iida T."/>
            <person name="Takami H."/>
            <person name="Honda T."/>
            <person name="Sasakawa C."/>
            <person name="Ogasawara N."/>
            <person name="Yasunaga T."/>
            <person name="Kuhara S."/>
            <person name="Shiba T."/>
            <person name="Hattori M."/>
            <person name="Shinagawa H."/>
        </authorList>
    </citation>
    <scope>NUCLEOTIDE SEQUENCE [LARGE SCALE GENOMIC DNA]</scope>
    <source>
        <strain>O157:H7 / Sakai / RIMD 0509952 / EHEC</strain>
    </source>
</reference>
<evidence type="ECO:0000250" key="1">
    <source>
        <dbReference type="UniProtKB" id="P39386"/>
    </source>
</evidence>
<evidence type="ECO:0000255" key="2"/>
<evidence type="ECO:0000305" key="3"/>
<sequence length="410" mass="44523">MPRFFARHAATLFFPMALILYDFAAYLSTDLIQPGIINVVRDFNADVSLAPAAVSLYLAGGMALQWLLGPLSDRIGRKPVLITGALIFTLACAATMFTTSMTQFLIARAIQGTSICFIATVGYVTVQEAFGQTKGIKLMAIITSIVLIAPIIGPLSGAALMHFVHWKVLFAIIAVMGFISFVGLLLAMPETVKRGAVPFSAKSVLRDFRNVFCNRLFLFGAATISLSYIPMMSWVAVSPVILIDAGGLTTSQFAWTQVPVFGAVIVANAIVARFVKDPTEPRFIWRAVPIQLVGLALLIIGNLLSPHVWLWSVLGTSLYAFGIGLIFPTLFRFTLFSNNLPKGTVSASLNMVILMVMSVSVEIGRWLWFNGGRLPFHLLAVVAGVIVVFTLAGLLNRVRQHQAAELAEEQ</sequence>
<comment type="function">
    <text evidence="1">Proton-dependent efflux pump (By similarity). Confers resistance to a broad spectrum of chemically unrelated substrates (By similarity).</text>
</comment>
<comment type="subcellular location">
    <subcellularLocation>
        <location evidence="1">Cell inner membrane</location>
        <topology evidence="2">Multi-pass membrane protein</topology>
    </subcellularLocation>
</comment>
<comment type="similarity">
    <text evidence="3">Belongs to the major facilitator superfamily.</text>
</comment>
<name>MDTM_ECO57</name>
<dbReference type="EMBL" id="AE005174">
    <property type="protein sequence ID" value="AAG59522.1"/>
    <property type="molecule type" value="Genomic_DNA"/>
</dbReference>
<dbReference type="EMBL" id="BA000007">
    <property type="protein sequence ID" value="BAB38723.1"/>
    <property type="molecule type" value="Genomic_DNA"/>
</dbReference>
<dbReference type="PIR" id="D91291">
    <property type="entry name" value="D91291"/>
</dbReference>
<dbReference type="PIR" id="F86132">
    <property type="entry name" value="F86132"/>
</dbReference>
<dbReference type="RefSeq" id="NP_313327.1">
    <property type="nucleotide sequence ID" value="NC_002695.1"/>
</dbReference>
<dbReference type="RefSeq" id="WP_001136983.1">
    <property type="nucleotide sequence ID" value="NZ_VOAI01000002.1"/>
</dbReference>
<dbReference type="SMR" id="Q8XB84"/>
<dbReference type="STRING" id="155864.Z5939"/>
<dbReference type="GeneID" id="913623"/>
<dbReference type="KEGG" id="ece:Z5939"/>
<dbReference type="KEGG" id="ecs:ECs_5300"/>
<dbReference type="PATRIC" id="fig|386585.9.peg.5542"/>
<dbReference type="eggNOG" id="COG2814">
    <property type="taxonomic scope" value="Bacteria"/>
</dbReference>
<dbReference type="HOGENOM" id="CLU_001265_47_2_6"/>
<dbReference type="OMA" id="YIPLMSW"/>
<dbReference type="Proteomes" id="UP000000558">
    <property type="component" value="Chromosome"/>
</dbReference>
<dbReference type="Proteomes" id="UP000002519">
    <property type="component" value="Chromosome"/>
</dbReference>
<dbReference type="GO" id="GO:0005886">
    <property type="term" value="C:plasma membrane"/>
    <property type="evidence" value="ECO:0007669"/>
    <property type="project" value="UniProtKB-SubCell"/>
</dbReference>
<dbReference type="GO" id="GO:0015385">
    <property type="term" value="F:sodium:proton antiporter activity"/>
    <property type="evidence" value="ECO:0007669"/>
    <property type="project" value="TreeGrafter"/>
</dbReference>
<dbReference type="GO" id="GO:0046677">
    <property type="term" value="P:response to antibiotic"/>
    <property type="evidence" value="ECO:0007669"/>
    <property type="project" value="UniProtKB-KW"/>
</dbReference>
<dbReference type="GO" id="GO:1990961">
    <property type="term" value="P:xenobiotic detoxification by transmembrane export across the plasma membrane"/>
    <property type="evidence" value="ECO:0007669"/>
    <property type="project" value="TreeGrafter"/>
</dbReference>
<dbReference type="CDD" id="cd17320">
    <property type="entry name" value="MFS_MdfA_MDR_like"/>
    <property type="match status" value="1"/>
</dbReference>
<dbReference type="FunFam" id="1.20.1720.10:FF:000010">
    <property type="entry name" value="Multidrug resistance protein MdtM"/>
    <property type="match status" value="1"/>
</dbReference>
<dbReference type="Gene3D" id="1.20.1720.10">
    <property type="entry name" value="Multidrug resistance protein D"/>
    <property type="match status" value="1"/>
</dbReference>
<dbReference type="InterPro" id="IPR011701">
    <property type="entry name" value="MFS"/>
</dbReference>
<dbReference type="InterPro" id="IPR020846">
    <property type="entry name" value="MFS_dom"/>
</dbReference>
<dbReference type="InterPro" id="IPR036259">
    <property type="entry name" value="MFS_trans_sf"/>
</dbReference>
<dbReference type="InterPro" id="IPR005829">
    <property type="entry name" value="Sugar_transporter_CS"/>
</dbReference>
<dbReference type="NCBIfam" id="NF011932">
    <property type="entry name" value="PRK15403.1"/>
    <property type="match status" value="1"/>
</dbReference>
<dbReference type="PANTHER" id="PTHR23502">
    <property type="entry name" value="MAJOR FACILITATOR SUPERFAMILY"/>
    <property type="match status" value="1"/>
</dbReference>
<dbReference type="PANTHER" id="PTHR23502:SF10">
    <property type="entry name" value="MULTIDRUG RESISTANCE PROTEIN MDTM"/>
    <property type="match status" value="1"/>
</dbReference>
<dbReference type="Pfam" id="PF07690">
    <property type="entry name" value="MFS_1"/>
    <property type="match status" value="1"/>
</dbReference>
<dbReference type="SUPFAM" id="SSF103473">
    <property type="entry name" value="MFS general substrate transporter"/>
    <property type="match status" value="1"/>
</dbReference>
<dbReference type="PROSITE" id="PS50850">
    <property type="entry name" value="MFS"/>
    <property type="match status" value="1"/>
</dbReference>
<accession>Q8XB84</accession>
<accession>Q7A8L0</accession>
<protein>
    <recommendedName>
        <fullName evidence="1">Multidrug resistance protein MdtM</fullName>
    </recommendedName>
</protein>